<comment type="function">
    <text evidence="1">Endonuclease that is involved in the suppression of homologous recombination and thus may have a key role in the control of bacterial genetic diversity.</text>
</comment>
<comment type="function">
    <text evidence="1">Acts as a ribosome collision sensor, splitting the ribosome into its 2 subunits. Detects stalled/collided 70S ribosomes which it binds and splits by an ATP-hydrolysis driven conformational change. Acts upstream of the ribosome quality control system (RQC), a ribosome-associated complex that mediates the extraction of incompletely synthesized nascent chains from stalled ribosomes and their subsequent degradation. Probably generates substrates for RQC.</text>
</comment>
<comment type="subunit">
    <text evidence="1">Homodimer. Binds to stalled ribosomes, contacting rRNA.</text>
</comment>
<comment type="similarity">
    <text evidence="1">Belongs to the DNA mismatch repair MutS family. MutS2 subfamily.</text>
</comment>
<keyword id="KW-0067">ATP-binding</keyword>
<keyword id="KW-0238">DNA-binding</keyword>
<keyword id="KW-0255">Endonuclease</keyword>
<keyword id="KW-0378">Hydrolase</keyword>
<keyword id="KW-0540">Nuclease</keyword>
<keyword id="KW-0547">Nucleotide-binding</keyword>
<keyword id="KW-0694">RNA-binding</keyword>
<keyword id="KW-0699">rRNA-binding</keyword>
<gene>
    <name evidence="1" type="primary">mutS2</name>
    <name evidence="1" type="synonym">rqcU</name>
    <name type="ordered locus">GTNG_2620</name>
</gene>
<dbReference type="EC" id="3.1.-.-" evidence="1"/>
<dbReference type="EC" id="3.6.4.-" evidence="1"/>
<dbReference type="EMBL" id="CP000557">
    <property type="protein sequence ID" value="ABO67965.1"/>
    <property type="molecule type" value="Genomic_DNA"/>
</dbReference>
<dbReference type="SMR" id="A4IRL1"/>
<dbReference type="KEGG" id="gtn:GTNG_2620"/>
<dbReference type="eggNOG" id="COG1193">
    <property type="taxonomic scope" value="Bacteria"/>
</dbReference>
<dbReference type="HOGENOM" id="CLU_011252_2_1_9"/>
<dbReference type="Proteomes" id="UP000001578">
    <property type="component" value="Chromosome"/>
</dbReference>
<dbReference type="GO" id="GO:0005524">
    <property type="term" value="F:ATP binding"/>
    <property type="evidence" value="ECO:0007669"/>
    <property type="project" value="UniProtKB-UniRule"/>
</dbReference>
<dbReference type="GO" id="GO:0016887">
    <property type="term" value="F:ATP hydrolysis activity"/>
    <property type="evidence" value="ECO:0007669"/>
    <property type="project" value="InterPro"/>
</dbReference>
<dbReference type="GO" id="GO:0140664">
    <property type="term" value="F:ATP-dependent DNA damage sensor activity"/>
    <property type="evidence" value="ECO:0007669"/>
    <property type="project" value="InterPro"/>
</dbReference>
<dbReference type="GO" id="GO:0004519">
    <property type="term" value="F:endonuclease activity"/>
    <property type="evidence" value="ECO:0007669"/>
    <property type="project" value="UniProtKB-UniRule"/>
</dbReference>
<dbReference type="GO" id="GO:0030983">
    <property type="term" value="F:mismatched DNA binding"/>
    <property type="evidence" value="ECO:0007669"/>
    <property type="project" value="InterPro"/>
</dbReference>
<dbReference type="GO" id="GO:0043023">
    <property type="term" value="F:ribosomal large subunit binding"/>
    <property type="evidence" value="ECO:0007669"/>
    <property type="project" value="UniProtKB-UniRule"/>
</dbReference>
<dbReference type="GO" id="GO:0019843">
    <property type="term" value="F:rRNA binding"/>
    <property type="evidence" value="ECO:0007669"/>
    <property type="project" value="UniProtKB-UniRule"/>
</dbReference>
<dbReference type="GO" id="GO:0006298">
    <property type="term" value="P:mismatch repair"/>
    <property type="evidence" value="ECO:0007669"/>
    <property type="project" value="InterPro"/>
</dbReference>
<dbReference type="GO" id="GO:0045910">
    <property type="term" value="P:negative regulation of DNA recombination"/>
    <property type="evidence" value="ECO:0007669"/>
    <property type="project" value="InterPro"/>
</dbReference>
<dbReference type="GO" id="GO:0072344">
    <property type="term" value="P:rescue of stalled ribosome"/>
    <property type="evidence" value="ECO:0007669"/>
    <property type="project" value="UniProtKB-UniRule"/>
</dbReference>
<dbReference type="CDD" id="cd03280">
    <property type="entry name" value="ABC_MutS2"/>
    <property type="match status" value="1"/>
</dbReference>
<dbReference type="CDD" id="cd06503">
    <property type="entry name" value="ATP-synt_Fo_b"/>
    <property type="match status" value="1"/>
</dbReference>
<dbReference type="FunFam" id="3.40.50.300:FF:000830">
    <property type="entry name" value="Endonuclease MutS2"/>
    <property type="match status" value="1"/>
</dbReference>
<dbReference type="Gene3D" id="3.30.1370.110">
    <property type="match status" value="1"/>
</dbReference>
<dbReference type="Gene3D" id="3.40.50.300">
    <property type="entry name" value="P-loop containing nucleotide triphosphate hydrolases"/>
    <property type="match status" value="1"/>
</dbReference>
<dbReference type="HAMAP" id="MF_00092">
    <property type="entry name" value="MutS2"/>
    <property type="match status" value="1"/>
</dbReference>
<dbReference type="InterPro" id="IPR000432">
    <property type="entry name" value="DNA_mismatch_repair_MutS_C"/>
</dbReference>
<dbReference type="InterPro" id="IPR007696">
    <property type="entry name" value="DNA_mismatch_repair_MutS_core"/>
</dbReference>
<dbReference type="InterPro" id="IPR036187">
    <property type="entry name" value="DNA_mismatch_repair_MutS_sf"/>
</dbReference>
<dbReference type="InterPro" id="IPR046893">
    <property type="entry name" value="MSSS"/>
</dbReference>
<dbReference type="InterPro" id="IPR045076">
    <property type="entry name" value="MutS"/>
</dbReference>
<dbReference type="InterPro" id="IPR005747">
    <property type="entry name" value="MutS2"/>
</dbReference>
<dbReference type="InterPro" id="IPR027417">
    <property type="entry name" value="P-loop_NTPase"/>
</dbReference>
<dbReference type="InterPro" id="IPR002625">
    <property type="entry name" value="Smr_dom"/>
</dbReference>
<dbReference type="InterPro" id="IPR036063">
    <property type="entry name" value="Smr_dom_sf"/>
</dbReference>
<dbReference type="NCBIfam" id="TIGR01069">
    <property type="entry name" value="mutS2"/>
    <property type="match status" value="1"/>
</dbReference>
<dbReference type="PANTHER" id="PTHR48466:SF2">
    <property type="entry name" value="OS10G0509000 PROTEIN"/>
    <property type="match status" value="1"/>
</dbReference>
<dbReference type="PANTHER" id="PTHR48466">
    <property type="entry name" value="OS10G0509000 PROTEIN-RELATED"/>
    <property type="match status" value="1"/>
</dbReference>
<dbReference type="Pfam" id="PF20297">
    <property type="entry name" value="MSSS"/>
    <property type="match status" value="1"/>
</dbReference>
<dbReference type="Pfam" id="PF00488">
    <property type="entry name" value="MutS_V"/>
    <property type="match status" value="1"/>
</dbReference>
<dbReference type="Pfam" id="PF01713">
    <property type="entry name" value="Smr"/>
    <property type="match status" value="1"/>
</dbReference>
<dbReference type="PIRSF" id="PIRSF005814">
    <property type="entry name" value="MutS_YshD"/>
    <property type="match status" value="1"/>
</dbReference>
<dbReference type="SMART" id="SM00534">
    <property type="entry name" value="MUTSac"/>
    <property type="match status" value="1"/>
</dbReference>
<dbReference type="SMART" id="SM00533">
    <property type="entry name" value="MUTSd"/>
    <property type="match status" value="1"/>
</dbReference>
<dbReference type="SMART" id="SM00463">
    <property type="entry name" value="SMR"/>
    <property type="match status" value="1"/>
</dbReference>
<dbReference type="SUPFAM" id="SSF48334">
    <property type="entry name" value="DNA repair protein MutS, domain III"/>
    <property type="match status" value="1"/>
</dbReference>
<dbReference type="SUPFAM" id="SSF52540">
    <property type="entry name" value="P-loop containing nucleoside triphosphate hydrolases"/>
    <property type="match status" value="1"/>
</dbReference>
<dbReference type="SUPFAM" id="SSF160443">
    <property type="entry name" value="SMR domain-like"/>
    <property type="match status" value="1"/>
</dbReference>
<dbReference type="PROSITE" id="PS00486">
    <property type="entry name" value="DNA_MISMATCH_REPAIR_2"/>
    <property type="match status" value="1"/>
</dbReference>
<dbReference type="PROSITE" id="PS50828">
    <property type="entry name" value="SMR"/>
    <property type="match status" value="1"/>
</dbReference>
<sequence>MQQKMLRILEFDKVKEQLAEHASSALGLEKIAALVPSSDLDEVAVWLEETDEAAAVLRLRGYVPLDGVVDIRSHLKRAAIGGVLSPIELLEVAATAAASRQMKQLIMSLHDEHGGLARLADYADELAEVPALEEDIRRSIDDHGEVLDTASDRLRSLRGQIRAAEARIREKLESIIRSPSAQKRLSDAIITIRNDRYVIPVKQEYRSAYGGIVHDQSASGATLFIEPQVVVELNNALREARAKEKQEIERILRELSAKVAEHDEPLKRAVEALAHFDFLFAKAKYARRLQAAKPAVNNRGYLRFLQARHPLIDQDKAVPNDIVLGGDYTTIVITGPNTGGKTVTLKTVGLLTIMAQAGLFIPAADGSEAAVFRSVFADIGDEQSIEQSLSTFSSHMVNIVDILRHVDEESLVLFDELGAGTDPQEGAALAIAILDEVHGRGARTVATTHYPELKAYGYNRPGVVNASVEFDTETLRPTYKLLIGIPGRSNAFDISRRLGLDERIIERAKVQVSAESHSVENMIASLERSKKQAEEDEARAHSAREEAERLRAEWEQKLEELEDKKAEQLAEAAQKATDIIRAAEREAERIINELRRLQKEKQAEVKEHELIAAKQRLAAAVPVVEKRKKTKKATARHAFQSGDEVKVTSLNQKGYLLEKVSEDEWQVQLGILKMKIHERDLEYIGSAPAKEVTPIATVKGKDAHVSLELDLRGERYEDALVRLEKYIDDAVLAGYPRVSIIHGKGTGALRQGVQQFLKQHRAVKSFRFGAANEGGTGVTVVELK</sequence>
<evidence type="ECO:0000255" key="1">
    <source>
        <dbReference type="HAMAP-Rule" id="MF_00092"/>
    </source>
</evidence>
<evidence type="ECO:0000256" key="2">
    <source>
        <dbReference type="SAM" id="MobiDB-lite"/>
    </source>
</evidence>
<organism>
    <name type="scientific">Geobacillus thermodenitrificans (strain NG80-2)</name>
    <dbReference type="NCBI Taxonomy" id="420246"/>
    <lineage>
        <taxon>Bacteria</taxon>
        <taxon>Bacillati</taxon>
        <taxon>Bacillota</taxon>
        <taxon>Bacilli</taxon>
        <taxon>Bacillales</taxon>
        <taxon>Anoxybacillaceae</taxon>
        <taxon>Geobacillus</taxon>
    </lineage>
</organism>
<reference key="1">
    <citation type="journal article" date="2007" name="Proc. Natl. Acad. Sci. U.S.A.">
        <title>Genome and proteome of long-chain alkane degrading Geobacillus thermodenitrificans NG80-2 isolated from a deep-subsurface oil reservoir.</title>
        <authorList>
            <person name="Feng L."/>
            <person name="Wang W."/>
            <person name="Cheng J."/>
            <person name="Ren Y."/>
            <person name="Zhao G."/>
            <person name="Gao C."/>
            <person name="Tang Y."/>
            <person name="Liu X."/>
            <person name="Han W."/>
            <person name="Peng X."/>
            <person name="Liu R."/>
            <person name="Wang L."/>
        </authorList>
    </citation>
    <scope>NUCLEOTIDE SEQUENCE [LARGE SCALE GENOMIC DNA]</scope>
    <source>
        <strain>NG80-2</strain>
    </source>
</reference>
<feature type="chain" id="PRO_1000075477" description="Endonuclease MutS2">
    <location>
        <begin position="1"/>
        <end position="784"/>
    </location>
</feature>
<feature type="domain" description="Smr" evidence="1">
    <location>
        <begin position="709"/>
        <end position="784"/>
    </location>
</feature>
<feature type="region of interest" description="Disordered" evidence="2">
    <location>
        <begin position="527"/>
        <end position="546"/>
    </location>
</feature>
<feature type="binding site" evidence="1">
    <location>
        <begin position="335"/>
        <end position="342"/>
    </location>
    <ligand>
        <name>ATP</name>
        <dbReference type="ChEBI" id="CHEBI:30616"/>
    </ligand>
</feature>
<name>MUTS2_GEOTN</name>
<proteinExistence type="inferred from homology"/>
<accession>A4IRL1</accession>
<protein>
    <recommendedName>
        <fullName evidence="1">Endonuclease MutS2</fullName>
        <ecNumber evidence="1">3.1.-.-</ecNumber>
    </recommendedName>
    <alternativeName>
        <fullName evidence="1">Ribosome-associated protein quality control-upstream factor</fullName>
        <shortName evidence="1">RQC-upstream factor</shortName>
        <shortName evidence="1">RqcU</shortName>
        <ecNumber evidence="1">3.6.4.-</ecNumber>
    </alternativeName>
</protein>